<dbReference type="EMBL" id="CU329671">
    <property type="protein sequence ID" value="CAB83170.2"/>
    <property type="molecule type" value="Genomic_DNA"/>
</dbReference>
<dbReference type="RefSeq" id="NP_596186.2">
    <property type="nucleotide sequence ID" value="NM_001022105.2"/>
</dbReference>
<dbReference type="SMR" id="Q9P7D6"/>
<dbReference type="BioGRID" id="277877">
    <property type="interactions" value="4"/>
</dbReference>
<dbReference type="FunCoup" id="Q9P7D6">
    <property type="interactions" value="14"/>
</dbReference>
<dbReference type="STRING" id="284812.Q9P7D6"/>
<dbReference type="PaxDb" id="4896-SPBP4H10.12.1"/>
<dbReference type="EnsemblFungi" id="SPBP4H10.12.1">
    <property type="protein sequence ID" value="SPBP4H10.12.1:pep"/>
    <property type="gene ID" value="SPBP4H10.12"/>
</dbReference>
<dbReference type="PomBase" id="SPBP4H10.12"/>
<dbReference type="VEuPathDB" id="FungiDB:SPBP4H10.12"/>
<dbReference type="eggNOG" id="ENOG502S03S">
    <property type="taxonomic scope" value="Eukaryota"/>
</dbReference>
<dbReference type="HOGENOM" id="CLU_101036_2_2_1"/>
<dbReference type="InParanoid" id="Q9P7D6"/>
<dbReference type="OMA" id="AWIDRKR"/>
<dbReference type="PhylomeDB" id="Q9P7D6"/>
<dbReference type="PRO" id="PR:Q9P7D6"/>
<dbReference type="Proteomes" id="UP000002485">
    <property type="component" value="Chromosome II"/>
</dbReference>
<dbReference type="GO" id="GO:0005829">
    <property type="term" value="C:cytosol"/>
    <property type="evidence" value="ECO:0007005"/>
    <property type="project" value="PomBase"/>
</dbReference>
<dbReference type="GO" id="GO:0005634">
    <property type="term" value="C:nucleus"/>
    <property type="evidence" value="ECO:0007005"/>
    <property type="project" value="PomBase"/>
</dbReference>
<dbReference type="GO" id="GO:0072380">
    <property type="term" value="C:TRC complex"/>
    <property type="evidence" value="ECO:0000318"/>
    <property type="project" value="GO_Central"/>
</dbReference>
<dbReference type="GO" id="GO:0090158">
    <property type="term" value="P:endoplasmic reticulum membrane organization"/>
    <property type="evidence" value="ECO:0000266"/>
    <property type="project" value="PomBase"/>
</dbReference>
<dbReference type="GO" id="GO:0006620">
    <property type="term" value="P:post-translational protein targeting to endoplasmic reticulum membrane"/>
    <property type="evidence" value="ECO:0000318"/>
    <property type="project" value="GO_Central"/>
</dbReference>
<dbReference type="Gene3D" id="3.30.450.150">
    <property type="entry name" value="Haem-degrading domain"/>
    <property type="match status" value="1"/>
</dbReference>
<dbReference type="InterPro" id="IPR005624">
    <property type="entry name" value="PduO/GlcC-like"/>
</dbReference>
<dbReference type="InterPro" id="IPR038084">
    <property type="entry name" value="PduO/GlcC-like_sf"/>
</dbReference>
<dbReference type="InterPro" id="IPR010371">
    <property type="entry name" value="YBR137W-like"/>
</dbReference>
<dbReference type="PANTHER" id="PTHR28255">
    <property type="match status" value="1"/>
</dbReference>
<dbReference type="PANTHER" id="PTHR28255:SF1">
    <property type="entry name" value="UPF0303 PROTEIN YBR137W"/>
    <property type="match status" value="1"/>
</dbReference>
<dbReference type="Pfam" id="PF03928">
    <property type="entry name" value="HbpS-like"/>
    <property type="match status" value="1"/>
</dbReference>
<dbReference type="PIRSF" id="PIRSF008757">
    <property type="entry name" value="UCP008757"/>
    <property type="match status" value="1"/>
</dbReference>
<dbReference type="SUPFAM" id="SSF143744">
    <property type="entry name" value="GlcG-like"/>
    <property type="match status" value="1"/>
</dbReference>
<feature type="chain" id="PRO_0000208925" description="UPF0303 protein P4H10.12">
    <location>
        <begin position="1"/>
        <end position="179"/>
    </location>
</feature>
<proteinExistence type="inferred from homology"/>
<keyword id="KW-1185">Reference proteome</keyword>
<accession>Q9P7D6</accession>
<sequence length="179" mass="20101">MFSILKRTDHLEESFLKNPNDNLKELENIIIEQEEALRFSSLSYADCYSLGVIVRDLYAKAAYTAPIVIDITLNGHQVFHLAYDGSSPDNDAFIKRKYATVQRFRMSSMRMGLMMAQQGTTMPAKYDVPAEEYGAFGGGFPIKLTSGIQIGVFCISGLRQIQDHCLIARSIAEFLTTKQ</sequence>
<gene>
    <name type="ORF">SPBP4H10.12</name>
</gene>
<organism>
    <name type="scientific">Schizosaccharomyces pombe (strain 972 / ATCC 24843)</name>
    <name type="common">Fission yeast</name>
    <dbReference type="NCBI Taxonomy" id="284812"/>
    <lineage>
        <taxon>Eukaryota</taxon>
        <taxon>Fungi</taxon>
        <taxon>Dikarya</taxon>
        <taxon>Ascomycota</taxon>
        <taxon>Taphrinomycotina</taxon>
        <taxon>Schizosaccharomycetes</taxon>
        <taxon>Schizosaccharomycetales</taxon>
        <taxon>Schizosaccharomycetaceae</taxon>
        <taxon>Schizosaccharomyces</taxon>
    </lineage>
</organism>
<reference key="1">
    <citation type="journal article" date="2002" name="Nature">
        <title>The genome sequence of Schizosaccharomyces pombe.</title>
        <authorList>
            <person name="Wood V."/>
            <person name="Gwilliam R."/>
            <person name="Rajandream M.A."/>
            <person name="Lyne M.H."/>
            <person name="Lyne R."/>
            <person name="Stewart A."/>
            <person name="Sgouros J.G."/>
            <person name="Peat N."/>
            <person name="Hayles J."/>
            <person name="Baker S.G."/>
            <person name="Basham D."/>
            <person name="Bowman S."/>
            <person name="Brooks K."/>
            <person name="Brown D."/>
            <person name="Brown S."/>
            <person name="Chillingworth T."/>
            <person name="Churcher C.M."/>
            <person name="Collins M."/>
            <person name="Connor R."/>
            <person name="Cronin A."/>
            <person name="Davis P."/>
            <person name="Feltwell T."/>
            <person name="Fraser A."/>
            <person name="Gentles S."/>
            <person name="Goble A."/>
            <person name="Hamlin N."/>
            <person name="Harris D.E."/>
            <person name="Hidalgo J."/>
            <person name="Hodgson G."/>
            <person name="Holroyd S."/>
            <person name="Hornsby T."/>
            <person name="Howarth S."/>
            <person name="Huckle E.J."/>
            <person name="Hunt S."/>
            <person name="Jagels K."/>
            <person name="James K.D."/>
            <person name="Jones L."/>
            <person name="Jones M."/>
            <person name="Leather S."/>
            <person name="McDonald S."/>
            <person name="McLean J."/>
            <person name="Mooney P."/>
            <person name="Moule S."/>
            <person name="Mungall K.L."/>
            <person name="Murphy L.D."/>
            <person name="Niblett D."/>
            <person name="Odell C."/>
            <person name="Oliver K."/>
            <person name="O'Neil S."/>
            <person name="Pearson D."/>
            <person name="Quail M.A."/>
            <person name="Rabbinowitsch E."/>
            <person name="Rutherford K.M."/>
            <person name="Rutter S."/>
            <person name="Saunders D."/>
            <person name="Seeger K."/>
            <person name="Sharp S."/>
            <person name="Skelton J."/>
            <person name="Simmonds M.N."/>
            <person name="Squares R."/>
            <person name="Squares S."/>
            <person name="Stevens K."/>
            <person name="Taylor K."/>
            <person name="Taylor R.G."/>
            <person name="Tivey A."/>
            <person name="Walsh S.V."/>
            <person name="Warren T."/>
            <person name="Whitehead S."/>
            <person name="Woodward J.R."/>
            <person name="Volckaert G."/>
            <person name="Aert R."/>
            <person name="Robben J."/>
            <person name="Grymonprez B."/>
            <person name="Weltjens I."/>
            <person name="Vanstreels E."/>
            <person name="Rieger M."/>
            <person name="Schaefer M."/>
            <person name="Mueller-Auer S."/>
            <person name="Gabel C."/>
            <person name="Fuchs M."/>
            <person name="Duesterhoeft A."/>
            <person name="Fritzc C."/>
            <person name="Holzer E."/>
            <person name="Moestl D."/>
            <person name="Hilbert H."/>
            <person name="Borzym K."/>
            <person name="Langer I."/>
            <person name="Beck A."/>
            <person name="Lehrach H."/>
            <person name="Reinhardt R."/>
            <person name="Pohl T.M."/>
            <person name="Eger P."/>
            <person name="Zimmermann W."/>
            <person name="Wedler H."/>
            <person name="Wambutt R."/>
            <person name="Purnelle B."/>
            <person name="Goffeau A."/>
            <person name="Cadieu E."/>
            <person name="Dreano S."/>
            <person name="Gloux S."/>
            <person name="Lelaure V."/>
            <person name="Mottier S."/>
            <person name="Galibert F."/>
            <person name="Aves S.J."/>
            <person name="Xiang Z."/>
            <person name="Hunt C."/>
            <person name="Moore K."/>
            <person name="Hurst S.M."/>
            <person name="Lucas M."/>
            <person name="Rochet M."/>
            <person name="Gaillardin C."/>
            <person name="Tallada V.A."/>
            <person name="Garzon A."/>
            <person name="Thode G."/>
            <person name="Daga R.R."/>
            <person name="Cruzado L."/>
            <person name="Jimenez J."/>
            <person name="Sanchez M."/>
            <person name="del Rey F."/>
            <person name="Benito J."/>
            <person name="Dominguez A."/>
            <person name="Revuelta J.L."/>
            <person name="Moreno S."/>
            <person name="Armstrong J."/>
            <person name="Forsburg S.L."/>
            <person name="Cerutti L."/>
            <person name="Lowe T."/>
            <person name="McCombie W.R."/>
            <person name="Paulsen I."/>
            <person name="Potashkin J."/>
            <person name="Shpakovski G.V."/>
            <person name="Ussery D."/>
            <person name="Barrell B.G."/>
            <person name="Nurse P."/>
        </authorList>
    </citation>
    <scope>NUCLEOTIDE SEQUENCE [LARGE SCALE GENOMIC DNA]</scope>
    <source>
        <strain>972 / ATCC 24843</strain>
    </source>
</reference>
<evidence type="ECO:0000305" key="1"/>
<protein>
    <recommendedName>
        <fullName>UPF0303 protein P4H10.12</fullName>
    </recommendedName>
</protein>
<name>YOFC_SCHPO</name>
<comment type="similarity">
    <text evidence="1">Belongs to the UPF0303 family.</text>
</comment>